<protein>
    <recommendedName>
        <fullName evidence="1">ATP synthase subunit a</fullName>
    </recommendedName>
    <alternativeName>
        <fullName evidence="1">ATP synthase F0 sector subunit a</fullName>
    </alternativeName>
    <alternativeName>
        <fullName evidence="1">F-ATPase subunit 6</fullName>
    </alternativeName>
</protein>
<comment type="function">
    <text evidence="1">Key component of the proton channel; it plays a direct role in the translocation of protons across the membrane.</text>
</comment>
<comment type="subunit">
    <text evidence="1">F-type ATPases have 2 components, CF(1) - the catalytic core - and CF(0) - the membrane proton channel. CF(1) has five subunits: alpha(3), beta(3), gamma(1), delta(1), epsilon(1). CF(0) has three main subunits: a(1), b(2) and c(9-12). The alpha and beta chains form an alternating ring which encloses part of the gamma chain. CF(1) is attached to CF(0) by a central stalk formed by the gamma and epsilon chains, while a peripheral stalk is formed by the delta and b chains.</text>
</comment>
<comment type="subcellular location">
    <subcellularLocation>
        <location evidence="1">Cell inner membrane</location>
        <topology evidence="1">Multi-pass membrane protein</topology>
    </subcellularLocation>
</comment>
<comment type="similarity">
    <text evidence="1">Belongs to the ATPase A chain family.</text>
</comment>
<gene>
    <name evidence="1" type="primary">atpB</name>
    <name type="ordered locus">SPC_3956</name>
</gene>
<dbReference type="EMBL" id="CP000857">
    <property type="protein sequence ID" value="ACN48024.1"/>
    <property type="molecule type" value="Genomic_DNA"/>
</dbReference>
<dbReference type="RefSeq" id="WP_000135632.1">
    <property type="nucleotide sequence ID" value="NC_012125.1"/>
</dbReference>
<dbReference type="SMR" id="C0Q2N8"/>
<dbReference type="KEGG" id="sei:SPC_3956"/>
<dbReference type="HOGENOM" id="CLU_041018_1_0_6"/>
<dbReference type="Proteomes" id="UP000001599">
    <property type="component" value="Chromosome"/>
</dbReference>
<dbReference type="GO" id="GO:0005886">
    <property type="term" value="C:plasma membrane"/>
    <property type="evidence" value="ECO:0007669"/>
    <property type="project" value="UniProtKB-SubCell"/>
</dbReference>
<dbReference type="GO" id="GO:0045259">
    <property type="term" value="C:proton-transporting ATP synthase complex"/>
    <property type="evidence" value="ECO:0007669"/>
    <property type="project" value="UniProtKB-KW"/>
</dbReference>
<dbReference type="GO" id="GO:0046933">
    <property type="term" value="F:proton-transporting ATP synthase activity, rotational mechanism"/>
    <property type="evidence" value="ECO:0007669"/>
    <property type="project" value="UniProtKB-UniRule"/>
</dbReference>
<dbReference type="GO" id="GO:0042777">
    <property type="term" value="P:proton motive force-driven plasma membrane ATP synthesis"/>
    <property type="evidence" value="ECO:0007669"/>
    <property type="project" value="TreeGrafter"/>
</dbReference>
<dbReference type="CDD" id="cd00310">
    <property type="entry name" value="ATP-synt_Fo_a_6"/>
    <property type="match status" value="1"/>
</dbReference>
<dbReference type="FunFam" id="1.20.120.220:FF:000002">
    <property type="entry name" value="ATP synthase subunit a"/>
    <property type="match status" value="1"/>
</dbReference>
<dbReference type="Gene3D" id="1.20.120.220">
    <property type="entry name" value="ATP synthase, F0 complex, subunit A"/>
    <property type="match status" value="1"/>
</dbReference>
<dbReference type="HAMAP" id="MF_01393">
    <property type="entry name" value="ATP_synth_a_bact"/>
    <property type="match status" value="1"/>
</dbReference>
<dbReference type="InterPro" id="IPR045082">
    <property type="entry name" value="ATP_syn_F0_a_bact/chloroplast"/>
</dbReference>
<dbReference type="InterPro" id="IPR000568">
    <property type="entry name" value="ATP_synth_F0_asu"/>
</dbReference>
<dbReference type="InterPro" id="IPR023011">
    <property type="entry name" value="ATP_synth_F0_asu_AS"/>
</dbReference>
<dbReference type="InterPro" id="IPR035908">
    <property type="entry name" value="F0_ATP_A_sf"/>
</dbReference>
<dbReference type="NCBIfam" id="TIGR01131">
    <property type="entry name" value="ATP_synt_6_or_A"/>
    <property type="match status" value="1"/>
</dbReference>
<dbReference type="NCBIfam" id="NF004477">
    <property type="entry name" value="PRK05815.1-1"/>
    <property type="match status" value="1"/>
</dbReference>
<dbReference type="PANTHER" id="PTHR42823">
    <property type="entry name" value="ATP SYNTHASE SUBUNIT A, CHLOROPLASTIC"/>
    <property type="match status" value="1"/>
</dbReference>
<dbReference type="PANTHER" id="PTHR42823:SF3">
    <property type="entry name" value="ATP SYNTHASE SUBUNIT A, CHLOROPLASTIC"/>
    <property type="match status" value="1"/>
</dbReference>
<dbReference type="Pfam" id="PF00119">
    <property type="entry name" value="ATP-synt_A"/>
    <property type="match status" value="1"/>
</dbReference>
<dbReference type="PRINTS" id="PR00123">
    <property type="entry name" value="ATPASEA"/>
</dbReference>
<dbReference type="SUPFAM" id="SSF81336">
    <property type="entry name" value="F1F0 ATP synthase subunit A"/>
    <property type="match status" value="1"/>
</dbReference>
<dbReference type="PROSITE" id="PS00449">
    <property type="entry name" value="ATPASE_A"/>
    <property type="match status" value="1"/>
</dbReference>
<keyword id="KW-0066">ATP synthesis</keyword>
<keyword id="KW-0997">Cell inner membrane</keyword>
<keyword id="KW-1003">Cell membrane</keyword>
<keyword id="KW-0138">CF(0)</keyword>
<keyword id="KW-0375">Hydrogen ion transport</keyword>
<keyword id="KW-0406">Ion transport</keyword>
<keyword id="KW-0472">Membrane</keyword>
<keyword id="KW-0812">Transmembrane</keyword>
<keyword id="KW-1133">Transmembrane helix</keyword>
<keyword id="KW-0813">Transport</keyword>
<evidence type="ECO:0000255" key="1">
    <source>
        <dbReference type="HAMAP-Rule" id="MF_01393"/>
    </source>
</evidence>
<reference key="1">
    <citation type="journal article" date="2009" name="PLoS ONE">
        <title>Salmonella paratyphi C: genetic divergence from Salmonella choleraesuis and pathogenic convergence with Salmonella typhi.</title>
        <authorList>
            <person name="Liu W.-Q."/>
            <person name="Feng Y."/>
            <person name="Wang Y."/>
            <person name="Zou Q.-H."/>
            <person name="Chen F."/>
            <person name="Guo J.-T."/>
            <person name="Peng Y.-H."/>
            <person name="Jin Y."/>
            <person name="Li Y.-G."/>
            <person name="Hu S.-N."/>
            <person name="Johnston R.N."/>
            <person name="Liu G.-R."/>
            <person name="Liu S.-L."/>
        </authorList>
    </citation>
    <scope>NUCLEOTIDE SEQUENCE [LARGE SCALE GENOMIC DNA]</scope>
    <source>
        <strain>RKS4594</strain>
    </source>
</reference>
<organism>
    <name type="scientific">Salmonella paratyphi C (strain RKS4594)</name>
    <dbReference type="NCBI Taxonomy" id="476213"/>
    <lineage>
        <taxon>Bacteria</taxon>
        <taxon>Pseudomonadati</taxon>
        <taxon>Pseudomonadota</taxon>
        <taxon>Gammaproteobacteria</taxon>
        <taxon>Enterobacterales</taxon>
        <taxon>Enterobacteriaceae</taxon>
        <taxon>Salmonella</taxon>
    </lineage>
</organism>
<sequence>MASENMTPQEYIGHHLNNLQLDLRTFSLVDPQNPPATFWTLNIDSMFFSVVLGLLFLVMFRSVAKKATSGVPGKFQTAIELIVGFVHGSVKDMYHGKSKLIAPLALTIFVWVFLMNLMDLLPIDLLPYIAEHWLGLPATRVVPSADVNITLSMALGVFILILFYSIKMKGIGGFAKELTLQPFNHWAFIPVNLILEGVSLLSKPVSLGLRLFGNMYAGELIFILIAGLLPWWSQWILNVPWAIFHILIITLQAFIFMVLTIVYLSMASEEH</sequence>
<feature type="chain" id="PRO_1000184289" description="ATP synthase subunit a">
    <location>
        <begin position="1"/>
        <end position="271"/>
    </location>
</feature>
<feature type="transmembrane region" description="Helical" evidence="1">
    <location>
        <begin position="38"/>
        <end position="58"/>
    </location>
</feature>
<feature type="transmembrane region" description="Helical" evidence="1">
    <location>
        <begin position="100"/>
        <end position="120"/>
    </location>
</feature>
<feature type="transmembrane region" description="Helical" evidence="1">
    <location>
        <begin position="146"/>
        <end position="166"/>
    </location>
</feature>
<feature type="transmembrane region" description="Helical" evidence="1">
    <location>
        <begin position="220"/>
        <end position="240"/>
    </location>
</feature>
<feature type="transmembrane region" description="Helical" evidence="1">
    <location>
        <begin position="242"/>
        <end position="262"/>
    </location>
</feature>
<accession>C0Q2N8</accession>
<name>ATP6_SALPC</name>
<proteinExistence type="inferred from homology"/>